<organism>
    <name type="scientific">Streptococcus pyogenes serotype M3 (strain ATCC BAA-595 / MGAS315)</name>
    <dbReference type="NCBI Taxonomy" id="198466"/>
    <lineage>
        <taxon>Bacteria</taxon>
        <taxon>Bacillati</taxon>
        <taxon>Bacillota</taxon>
        <taxon>Bacilli</taxon>
        <taxon>Lactobacillales</taxon>
        <taxon>Streptococcaceae</taxon>
        <taxon>Streptococcus</taxon>
    </lineage>
</organism>
<reference key="1">
    <citation type="journal article" date="2002" name="Proc. Natl. Acad. Sci. U.S.A.">
        <title>Genome sequence of a serotype M3 strain of group A Streptococcus: phage-encoded toxins, the high-virulence phenotype, and clone emergence.</title>
        <authorList>
            <person name="Beres S.B."/>
            <person name="Sylva G.L."/>
            <person name="Barbian K.D."/>
            <person name="Lei B."/>
            <person name="Hoff J.S."/>
            <person name="Mammarella N.D."/>
            <person name="Liu M.-Y."/>
            <person name="Smoot J.C."/>
            <person name="Porcella S.F."/>
            <person name="Parkins L.D."/>
            <person name="Campbell D.S."/>
            <person name="Smith T.M."/>
            <person name="McCormick J.K."/>
            <person name="Leung D.Y.M."/>
            <person name="Schlievert P.M."/>
            <person name="Musser J.M."/>
        </authorList>
    </citation>
    <scope>NUCLEOTIDE SEQUENCE [LARGE SCALE GENOMIC DNA]</scope>
    <source>
        <strain>ATCC BAA-595 / MGAS315</strain>
    </source>
</reference>
<protein>
    <recommendedName>
        <fullName evidence="1">Formate--tetrahydrofolate ligase 2</fullName>
        <ecNumber evidence="1">6.3.4.3</ecNumber>
    </recommendedName>
    <alternativeName>
        <fullName evidence="1">Formyltetrahydrofolate synthetase 2</fullName>
        <shortName evidence="1">FHS 2</shortName>
        <shortName evidence="1">FTHFS 2</shortName>
    </alternativeName>
</protein>
<proteinExistence type="inferred from homology"/>
<name>FTHS2_STRP3</name>
<feature type="chain" id="PRO_0000199396" description="Formate--tetrahydrofolate ligase 2">
    <location>
        <begin position="1"/>
        <end position="557"/>
    </location>
</feature>
<feature type="binding site" evidence="1">
    <location>
        <begin position="66"/>
        <end position="73"/>
    </location>
    <ligand>
        <name>ATP</name>
        <dbReference type="ChEBI" id="CHEBI:30616"/>
    </ligand>
</feature>
<accession>P0DF92</accession>
<accession>Q79W25</accession>
<accession>Q8K5L8</accession>
<keyword id="KW-0067">ATP-binding</keyword>
<keyword id="KW-0436">Ligase</keyword>
<keyword id="KW-0547">Nucleotide-binding</keyword>
<keyword id="KW-0554">One-carbon metabolism</keyword>
<comment type="catalytic activity">
    <reaction evidence="1">
        <text>(6S)-5,6,7,8-tetrahydrofolate + formate + ATP = (6R)-10-formyltetrahydrofolate + ADP + phosphate</text>
        <dbReference type="Rhea" id="RHEA:20221"/>
        <dbReference type="ChEBI" id="CHEBI:15740"/>
        <dbReference type="ChEBI" id="CHEBI:30616"/>
        <dbReference type="ChEBI" id="CHEBI:43474"/>
        <dbReference type="ChEBI" id="CHEBI:57453"/>
        <dbReference type="ChEBI" id="CHEBI:195366"/>
        <dbReference type="ChEBI" id="CHEBI:456216"/>
        <dbReference type="EC" id="6.3.4.3"/>
    </reaction>
</comment>
<comment type="pathway">
    <text evidence="1">One-carbon metabolism; tetrahydrofolate interconversion.</text>
</comment>
<comment type="similarity">
    <text evidence="1">Belongs to the formate--tetrahydrofolate ligase family.</text>
</comment>
<dbReference type="EC" id="6.3.4.3" evidence="1"/>
<dbReference type="EMBL" id="AE014074">
    <property type="protein sequence ID" value="AAM80383.1"/>
    <property type="molecule type" value="Genomic_DNA"/>
</dbReference>
<dbReference type="RefSeq" id="WP_011055075.1">
    <property type="nucleotide sequence ID" value="NC_004070.1"/>
</dbReference>
<dbReference type="SMR" id="P0DF92"/>
<dbReference type="KEGG" id="spg:SpyM3_1776"/>
<dbReference type="HOGENOM" id="CLU_003601_3_3_9"/>
<dbReference type="UniPathway" id="UPA00193"/>
<dbReference type="Proteomes" id="UP000000564">
    <property type="component" value="Chromosome"/>
</dbReference>
<dbReference type="GO" id="GO:0005524">
    <property type="term" value="F:ATP binding"/>
    <property type="evidence" value="ECO:0007669"/>
    <property type="project" value="UniProtKB-UniRule"/>
</dbReference>
<dbReference type="GO" id="GO:0004329">
    <property type="term" value="F:formate-tetrahydrofolate ligase activity"/>
    <property type="evidence" value="ECO:0007669"/>
    <property type="project" value="UniProtKB-UniRule"/>
</dbReference>
<dbReference type="GO" id="GO:0035999">
    <property type="term" value="P:tetrahydrofolate interconversion"/>
    <property type="evidence" value="ECO:0007669"/>
    <property type="project" value="UniProtKB-UniRule"/>
</dbReference>
<dbReference type="CDD" id="cd00477">
    <property type="entry name" value="FTHFS"/>
    <property type="match status" value="1"/>
</dbReference>
<dbReference type="FunFam" id="3.30.1510.10:FF:000001">
    <property type="entry name" value="Formate--tetrahydrofolate ligase"/>
    <property type="match status" value="1"/>
</dbReference>
<dbReference type="FunFam" id="3.10.410.10:FF:000001">
    <property type="entry name" value="Putative formate--tetrahydrofolate ligase"/>
    <property type="match status" value="1"/>
</dbReference>
<dbReference type="Gene3D" id="3.30.1510.10">
    <property type="entry name" value="Domain 2, N(10)-formyltetrahydrofolate synthetase"/>
    <property type="match status" value="1"/>
</dbReference>
<dbReference type="Gene3D" id="3.10.410.10">
    <property type="entry name" value="Formyltetrahydrofolate synthetase, domain 3"/>
    <property type="match status" value="1"/>
</dbReference>
<dbReference type="Gene3D" id="3.40.50.300">
    <property type="entry name" value="P-loop containing nucleotide triphosphate hydrolases"/>
    <property type="match status" value="1"/>
</dbReference>
<dbReference type="HAMAP" id="MF_01543">
    <property type="entry name" value="FTHFS"/>
    <property type="match status" value="1"/>
</dbReference>
<dbReference type="InterPro" id="IPR000559">
    <property type="entry name" value="Formate_THF_ligase"/>
</dbReference>
<dbReference type="InterPro" id="IPR020628">
    <property type="entry name" value="Formate_THF_ligase_CS"/>
</dbReference>
<dbReference type="InterPro" id="IPR027417">
    <property type="entry name" value="P-loop_NTPase"/>
</dbReference>
<dbReference type="NCBIfam" id="NF010030">
    <property type="entry name" value="PRK13505.1"/>
    <property type="match status" value="1"/>
</dbReference>
<dbReference type="Pfam" id="PF01268">
    <property type="entry name" value="FTHFS"/>
    <property type="match status" value="1"/>
</dbReference>
<dbReference type="SUPFAM" id="SSF52540">
    <property type="entry name" value="P-loop containing nucleoside triphosphate hydrolases"/>
    <property type="match status" value="1"/>
</dbReference>
<dbReference type="PROSITE" id="PS00721">
    <property type="entry name" value="FTHFS_1"/>
    <property type="match status" value="1"/>
</dbReference>
<dbReference type="PROSITE" id="PS00722">
    <property type="entry name" value="FTHFS_2"/>
    <property type="match status" value="1"/>
</dbReference>
<sequence>MVLSDIEIANSVTMEPISKVANQLGIDEEALCLYGKYKAKIDARQLVALKDKPDGKLILVTAISPTPAGEGKTTTSVGLVDALSAIGKKAVIALREPSLGPVFGVKGGAAGGGHAQVVPMEDINLHFTGDFHAIGVANNLLAALIDNHIHHGNSLGIDSRRITWKRVVDMNDRQLRHIVDGLQGKVNGAPREDGYDITVASEIMAILCLSENISDLKARLEKIIIGYNYRGEPVTAKDLKAGGALAALLKDAIHPNLVQTLEHTPALIHGGPFANIAHGCNSVLATKLALKYGDYAVTEAGFGADLGAEKFIDIKCRMSGLRPAAVVLVATIRALKMHGGVPKADLATENVQAVVDGLPNLDKHLANIQDVYGLPVVVAINKFPLDTDAELQAVYDACDKRGVDVVISDVWANGGAGARELAEKVVTLAEQDNQFRFVYEEDDSIETKLTKIVTKVYGGKGITLSPAAKRELADLERLGFGNYPICMAKTQYSFSDDAKKLGAPTDFTVTISNLKVSAGAGFIVALTGAIMTMPGLPKVPASETIDIDEEGNITGLF</sequence>
<gene>
    <name evidence="1" type="primary">fhs2</name>
    <name type="synonym">fhs.2</name>
    <name type="ordered locus">SpyM3_1776</name>
</gene>
<evidence type="ECO:0000255" key="1">
    <source>
        <dbReference type="HAMAP-Rule" id="MF_01543"/>
    </source>
</evidence>